<dbReference type="EC" id="1.11.1.24" evidence="3"/>
<dbReference type="EMBL" id="BT021073">
    <property type="protein sequence ID" value="AAX09090.1"/>
    <property type="molecule type" value="mRNA"/>
</dbReference>
<dbReference type="EMBL" id="BC148009">
    <property type="protein sequence ID" value="AAI48010.1"/>
    <property type="molecule type" value="mRNA"/>
</dbReference>
<dbReference type="SMR" id="Q5E947"/>
<dbReference type="FunCoup" id="Q5E947">
    <property type="interactions" value="1519"/>
</dbReference>
<dbReference type="STRING" id="9913.ENSBTAP00000004751"/>
<dbReference type="PeroxiBase" id="4494">
    <property type="entry name" value="Bt2CysPrx01"/>
</dbReference>
<dbReference type="PaxDb" id="9913-ENSBTAP00000004751"/>
<dbReference type="PeptideAtlas" id="Q5E947"/>
<dbReference type="Ensembl" id="ENSBTAT00000004751.5">
    <property type="protein sequence ID" value="ENSBTAP00000004751.3"/>
    <property type="gene ID" value="ENSBTAG00000003642.5"/>
</dbReference>
<dbReference type="VEuPathDB" id="HostDB:ENSBTAG00000003642"/>
<dbReference type="VGNC" id="VGNC:33299">
    <property type="gene designation" value="PRDX1"/>
</dbReference>
<dbReference type="eggNOG" id="KOG0852">
    <property type="taxonomic scope" value="Eukaryota"/>
</dbReference>
<dbReference type="GeneTree" id="ENSGT00940000154277"/>
<dbReference type="HOGENOM" id="CLU_042529_21_1_1"/>
<dbReference type="InParanoid" id="Q5E947"/>
<dbReference type="OMA" id="FWYPKDF"/>
<dbReference type="OrthoDB" id="185659at2759"/>
<dbReference type="TreeFam" id="TF105181"/>
<dbReference type="Reactome" id="R-BTA-3299685">
    <property type="pathway name" value="Detoxification of Reactive Oxygen Species"/>
</dbReference>
<dbReference type="Reactome" id="R-BTA-5628897">
    <property type="pathway name" value="TP53 Regulates Metabolic Genes"/>
</dbReference>
<dbReference type="Reactome" id="R-BTA-9818027">
    <property type="pathway name" value="NFE2L2 regulating anti-oxidant/detoxification enzymes"/>
</dbReference>
<dbReference type="Proteomes" id="UP000009136">
    <property type="component" value="Chromosome 3"/>
</dbReference>
<dbReference type="Bgee" id="ENSBTAG00000003642">
    <property type="expression patterns" value="Expressed in milk and 104 other cell types or tissues"/>
</dbReference>
<dbReference type="GO" id="GO:0005829">
    <property type="term" value="C:cytosol"/>
    <property type="evidence" value="ECO:0000318"/>
    <property type="project" value="GO_Central"/>
</dbReference>
<dbReference type="GO" id="GO:0005634">
    <property type="term" value="C:nucleus"/>
    <property type="evidence" value="ECO:0007669"/>
    <property type="project" value="Ensembl"/>
</dbReference>
<dbReference type="GO" id="GO:0042802">
    <property type="term" value="F:identical protein binding"/>
    <property type="evidence" value="ECO:0007669"/>
    <property type="project" value="Ensembl"/>
</dbReference>
<dbReference type="GO" id="GO:0008379">
    <property type="term" value="F:thioredoxin peroxidase activity"/>
    <property type="evidence" value="ECO:0000318"/>
    <property type="project" value="GO_Central"/>
</dbReference>
<dbReference type="GO" id="GO:0007249">
    <property type="term" value="P:canonical NF-kappaB signal transduction"/>
    <property type="evidence" value="ECO:0007669"/>
    <property type="project" value="Ensembl"/>
</dbReference>
<dbReference type="GO" id="GO:0045454">
    <property type="term" value="P:cell redox homeostasis"/>
    <property type="evidence" value="ECO:0000318"/>
    <property type="project" value="GO_Central"/>
</dbReference>
<dbReference type="GO" id="GO:0034101">
    <property type="term" value="P:erythrocyte homeostasis"/>
    <property type="evidence" value="ECO:0007669"/>
    <property type="project" value="Ensembl"/>
</dbReference>
<dbReference type="GO" id="GO:0048144">
    <property type="term" value="P:fibroblast proliferation"/>
    <property type="evidence" value="ECO:0007669"/>
    <property type="project" value="Ensembl"/>
</dbReference>
<dbReference type="GO" id="GO:0042744">
    <property type="term" value="P:hydrogen peroxide catabolic process"/>
    <property type="evidence" value="ECO:0000318"/>
    <property type="project" value="GO_Central"/>
</dbReference>
<dbReference type="GO" id="GO:0045321">
    <property type="term" value="P:leukocyte activation"/>
    <property type="evidence" value="ECO:0000318"/>
    <property type="project" value="GO_Central"/>
</dbReference>
<dbReference type="GO" id="GO:0030101">
    <property type="term" value="P:natural killer cell activation"/>
    <property type="evidence" value="ECO:0007669"/>
    <property type="project" value="Ensembl"/>
</dbReference>
<dbReference type="GO" id="GO:0042267">
    <property type="term" value="P:natural killer cell mediated cytotoxicity"/>
    <property type="evidence" value="ECO:0007669"/>
    <property type="project" value="Ensembl"/>
</dbReference>
<dbReference type="GO" id="GO:1901222">
    <property type="term" value="P:regulation of non-canonical NF-kappaB signal transduction"/>
    <property type="evidence" value="ECO:0000250"/>
    <property type="project" value="AgBase"/>
</dbReference>
<dbReference type="GO" id="GO:0032872">
    <property type="term" value="P:regulation of stress-activated MAPK cascade"/>
    <property type="evidence" value="ECO:0007669"/>
    <property type="project" value="Ensembl"/>
</dbReference>
<dbReference type="GO" id="GO:0019430">
    <property type="term" value="P:removal of superoxide radicals"/>
    <property type="evidence" value="ECO:0000318"/>
    <property type="project" value="GO_Central"/>
</dbReference>
<dbReference type="GO" id="GO:0006979">
    <property type="term" value="P:response to oxidative stress"/>
    <property type="evidence" value="ECO:0000250"/>
    <property type="project" value="AgBase"/>
</dbReference>
<dbReference type="CDD" id="cd03015">
    <property type="entry name" value="PRX_Typ2cys"/>
    <property type="match status" value="1"/>
</dbReference>
<dbReference type="FunFam" id="3.40.30.10:FF:000003">
    <property type="entry name" value="Peroxiredoxin 1"/>
    <property type="match status" value="1"/>
</dbReference>
<dbReference type="Gene3D" id="3.40.30.10">
    <property type="entry name" value="Glutaredoxin"/>
    <property type="match status" value="1"/>
</dbReference>
<dbReference type="InterPro" id="IPR000866">
    <property type="entry name" value="AhpC/TSA"/>
</dbReference>
<dbReference type="InterPro" id="IPR050217">
    <property type="entry name" value="Peroxiredoxin"/>
</dbReference>
<dbReference type="InterPro" id="IPR024706">
    <property type="entry name" value="Peroxiredoxin_AhpC-typ"/>
</dbReference>
<dbReference type="InterPro" id="IPR019479">
    <property type="entry name" value="Peroxiredoxin_C"/>
</dbReference>
<dbReference type="InterPro" id="IPR036249">
    <property type="entry name" value="Thioredoxin-like_sf"/>
</dbReference>
<dbReference type="InterPro" id="IPR013766">
    <property type="entry name" value="Thioredoxin_domain"/>
</dbReference>
<dbReference type="PANTHER" id="PTHR10681:SF111">
    <property type="entry name" value="PEROXIREDOXIN-1"/>
    <property type="match status" value="1"/>
</dbReference>
<dbReference type="PANTHER" id="PTHR10681">
    <property type="entry name" value="THIOREDOXIN PEROXIDASE"/>
    <property type="match status" value="1"/>
</dbReference>
<dbReference type="Pfam" id="PF10417">
    <property type="entry name" value="1-cysPrx_C"/>
    <property type="match status" value="1"/>
</dbReference>
<dbReference type="Pfam" id="PF00578">
    <property type="entry name" value="AhpC-TSA"/>
    <property type="match status" value="1"/>
</dbReference>
<dbReference type="PIRSF" id="PIRSF000239">
    <property type="entry name" value="AHPC"/>
    <property type="match status" value="1"/>
</dbReference>
<dbReference type="SUPFAM" id="SSF52833">
    <property type="entry name" value="Thioredoxin-like"/>
    <property type="match status" value="1"/>
</dbReference>
<dbReference type="PROSITE" id="PS51352">
    <property type="entry name" value="THIOREDOXIN_2"/>
    <property type="match status" value="1"/>
</dbReference>
<gene>
    <name type="primary">PRDX1</name>
</gene>
<feature type="initiator methionine" description="Removed" evidence="3">
    <location>
        <position position="1"/>
    </location>
</feature>
<feature type="chain" id="PRO_0000135075" description="Peroxiredoxin-1">
    <location>
        <begin position="2"/>
        <end position="199"/>
    </location>
</feature>
<feature type="domain" description="Thioredoxin" evidence="4">
    <location>
        <begin position="6"/>
        <end position="165"/>
    </location>
</feature>
<feature type="region of interest" description="Disordered" evidence="5">
    <location>
        <begin position="176"/>
        <end position="199"/>
    </location>
</feature>
<feature type="compositionally biased region" description="Basic and acidic residues" evidence="5">
    <location>
        <begin position="184"/>
        <end position="199"/>
    </location>
</feature>
<feature type="active site" description="Cysteine sulfenic acid (-SOH) intermediate" evidence="3">
    <location>
        <position position="52"/>
    </location>
</feature>
<feature type="modified residue" description="N-acetylserine" evidence="3">
    <location>
        <position position="2"/>
    </location>
</feature>
<feature type="modified residue" description="N6-acetyllysine; alternate" evidence="3">
    <location>
        <position position="7"/>
    </location>
</feature>
<feature type="modified residue" description="N6-acetyllysine" evidence="3">
    <location>
        <position position="16"/>
    </location>
</feature>
<feature type="modified residue" description="N6-acetyllysine" evidence="3">
    <location>
        <position position="27"/>
    </location>
</feature>
<feature type="modified residue" description="N6-acetyllysine; alternate" evidence="3">
    <location>
        <position position="35"/>
    </location>
</feature>
<feature type="modified residue" description="N6-succinyllysine; alternate" evidence="2">
    <location>
        <position position="35"/>
    </location>
</feature>
<feature type="modified residue" description="Phosphothreonine" evidence="3">
    <location>
        <position position="90"/>
    </location>
</feature>
<feature type="modified residue" description="N6-acetyllysine" evidence="2">
    <location>
        <position position="136"/>
    </location>
</feature>
<feature type="modified residue" description="N6-acetyllysine" evidence="3">
    <location>
        <position position="197"/>
    </location>
</feature>
<feature type="disulfide bond" description="Interchain (with C-173); in linked form" evidence="3">
    <location>
        <position position="52"/>
    </location>
</feature>
<feature type="disulfide bond" description="Interchain (with C-52); in linked form" evidence="3">
    <location>
        <position position="173"/>
    </location>
</feature>
<feature type="cross-link" description="Glycyl lysine isopeptide (Lys-Gly) (interchain with G-Cter in SUMO2); alternate" evidence="3">
    <location>
        <position position="7"/>
    </location>
</feature>
<feature type="cross-link" description="Glycyl lysine isopeptide (Lys-Gly) (interchain with G-Cter in SUMO2)" evidence="3">
    <location>
        <position position="120"/>
    </location>
</feature>
<feature type="cross-link" description="Glycyl lysine isopeptide (Lys-Gly) (interchain with G-Cter in SUMO1)" evidence="3">
    <location>
        <position position="185"/>
    </location>
</feature>
<protein>
    <recommendedName>
        <fullName>Peroxiredoxin-1</fullName>
        <ecNumber evidence="3">1.11.1.24</ecNumber>
    </recommendedName>
    <alternativeName>
        <fullName evidence="6">Thioredoxin-dependent peroxiredoxin 1</fullName>
    </alternativeName>
</protein>
<reference key="1">
    <citation type="journal article" date="2005" name="BMC Genomics">
        <title>Characterization of 954 bovine full-CDS cDNA sequences.</title>
        <authorList>
            <person name="Harhay G.P."/>
            <person name="Sonstegard T.S."/>
            <person name="Keele J.W."/>
            <person name="Heaton M.P."/>
            <person name="Clawson M.L."/>
            <person name="Snelling W.M."/>
            <person name="Wiedmann R.T."/>
            <person name="Van Tassell C.P."/>
            <person name="Smith T.P.L."/>
        </authorList>
    </citation>
    <scope>NUCLEOTIDE SEQUENCE [LARGE SCALE MRNA]</scope>
</reference>
<reference key="2">
    <citation type="submission" date="2007-06" db="EMBL/GenBank/DDBJ databases">
        <authorList>
            <consortium name="NIH - Mammalian Gene Collection (MGC) project"/>
        </authorList>
    </citation>
    <scope>NUCLEOTIDE SEQUENCE [LARGE SCALE MRNA]</scope>
    <source>
        <strain>Hereford</strain>
        <tissue>Ascending colon</tissue>
    </source>
</reference>
<evidence type="ECO:0000250" key="1">
    <source>
        <dbReference type="UniProtKB" id="P0CB50"/>
    </source>
</evidence>
<evidence type="ECO:0000250" key="2">
    <source>
        <dbReference type="UniProtKB" id="P35700"/>
    </source>
</evidence>
<evidence type="ECO:0000250" key="3">
    <source>
        <dbReference type="UniProtKB" id="Q06830"/>
    </source>
</evidence>
<evidence type="ECO:0000255" key="4">
    <source>
        <dbReference type="PROSITE-ProRule" id="PRU00691"/>
    </source>
</evidence>
<evidence type="ECO:0000256" key="5">
    <source>
        <dbReference type="SAM" id="MobiDB-lite"/>
    </source>
</evidence>
<evidence type="ECO:0000305" key="6"/>
<proteinExistence type="evidence at transcript level"/>
<name>PRDX1_BOVIN</name>
<organism>
    <name type="scientific">Bos taurus</name>
    <name type="common">Bovine</name>
    <dbReference type="NCBI Taxonomy" id="9913"/>
    <lineage>
        <taxon>Eukaryota</taxon>
        <taxon>Metazoa</taxon>
        <taxon>Chordata</taxon>
        <taxon>Craniata</taxon>
        <taxon>Vertebrata</taxon>
        <taxon>Euteleostomi</taxon>
        <taxon>Mammalia</taxon>
        <taxon>Eutheria</taxon>
        <taxon>Laurasiatheria</taxon>
        <taxon>Artiodactyla</taxon>
        <taxon>Ruminantia</taxon>
        <taxon>Pecora</taxon>
        <taxon>Bovidae</taxon>
        <taxon>Bovinae</taxon>
        <taxon>Bos</taxon>
    </lineage>
</organism>
<sequence length="199" mass="22210">MSSGNAKIGHRAPQFKATAVMPDGQFKDISLADYKGKYVVFFFYPLDFTFVCPTEIIAFSDRAEEFKKLNCQVIGASVDSHFCHLAWINTPKKQGGLGPMNIPLISDPKRTIAQDYGVLKADEGISFRGLFIIDDKGILRQITINDLPVGRSVDETLRLVQAFQFTDKHGEVCPAGWKPGSDTIKPDVQKSKEYFSKQK</sequence>
<keyword id="KW-0007">Acetylation</keyword>
<keyword id="KW-0049">Antioxidant</keyword>
<keyword id="KW-0963">Cytoplasm</keyword>
<keyword id="KW-1015">Disulfide bond</keyword>
<keyword id="KW-1017">Isopeptide bond</keyword>
<keyword id="KW-0560">Oxidoreductase</keyword>
<keyword id="KW-0575">Peroxidase</keyword>
<keyword id="KW-0597">Phosphoprotein</keyword>
<keyword id="KW-0676">Redox-active center</keyword>
<keyword id="KW-1185">Reference proteome</keyword>
<keyword id="KW-0832">Ubl conjugation</keyword>
<comment type="function">
    <text evidence="1 3">Thiol-specific peroxidase that catalyzes the reduction of hydrogen peroxide and organic hydroperoxides to water and alcohols, respectively. Plays a role in cell protection against oxidative stress by detoxifying peroxides and as sensor of hydrogen peroxide-mediated signaling events. Might participate in the signaling cascades of growth factors and tumor necrosis factor-alpha by regulating the intracellular concentrations of H(2)O(2) (By similarity). Reduces an intramolecular disulfide bond in GDPD5 that gates the ability to GDPD5 to drive postmitotic motor neuron differentiation (By similarity).</text>
</comment>
<comment type="catalytic activity">
    <reaction evidence="3">
        <text>a hydroperoxide + [thioredoxin]-dithiol = an alcohol + [thioredoxin]-disulfide + H2O</text>
        <dbReference type="Rhea" id="RHEA:62620"/>
        <dbReference type="Rhea" id="RHEA-COMP:10698"/>
        <dbReference type="Rhea" id="RHEA-COMP:10700"/>
        <dbReference type="ChEBI" id="CHEBI:15377"/>
        <dbReference type="ChEBI" id="CHEBI:29950"/>
        <dbReference type="ChEBI" id="CHEBI:30879"/>
        <dbReference type="ChEBI" id="CHEBI:35924"/>
        <dbReference type="ChEBI" id="CHEBI:50058"/>
        <dbReference type="EC" id="1.11.1.24"/>
    </reaction>
</comment>
<comment type="subunit">
    <text evidence="1 3">Homodimer; disulfide-linked, upon oxidation. 5 homodimers assemble to form a ring-like decamer (By similarity). Interacts with GDPD5; forms a mixed-disulfide with GDPD5 (By similarity). Interacts with SESN1 and SESN2 (By similarity). Interacts with FAM107A (By similarity).</text>
</comment>
<comment type="subcellular location">
    <subcellularLocation>
        <location evidence="3">Cytoplasm</location>
    </subcellularLocation>
</comment>
<comment type="PTM">
    <text evidence="3">Phosphorylated on Thr-90 during the M-phase, which leads to a decrease in enzymatic activity.</text>
</comment>
<comment type="PTM">
    <text evidence="3">Acetylation increases reducing activity and resistance to superoxidation. Deacetylated by HDAC6 which decreases reducing activity.</text>
</comment>
<comment type="miscellaneous">
    <text evidence="3">The active site is a conserved redox-active cysteine residue, the peroxidatic cysteine (C(P)), which makes the nucleophilic attack on the peroxide substrate. The peroxide oxidizes the C(P)-SH to cysteine sulfenic acid (C(P)-SOH), which then reacts with another cysteine residue, the resolving cysteine (C(R)), to form a disulfide bridge. The disulfide is subsequently reduced by an appropriate electron donor to complete the catalytic cycle. In this typical 2-Cys peroxiredoxin, C(R) is provided by the other dimeric subunit to form an intersubunit disulfide. The disulfide is subsequently reduced by thioredoxin.</text>
</comment>
<comment type="similarity">
    <text evidence="6">Belongs to the peroxiredoxin family. AhpC/Prx1 subfamily.</text>
</comment>
<accession>Q5E947</accession>
<accession>A6QLL7</accession>